<protein>
    <recommendedName>
        <fullName evidence="1">UPF0473 protein SpyM51754</fullName>
    </recommendedName>
</protein>
<dbReference type="EMBL" id="AM295007">
    <property type="protein sequence ID" value="CAM31076.1"/>
    <property type="molecule type" value="Genomic_DNA"/>
</dbReference>
<dbReference type="RefSeq" id="WP_002982199.1">
    <property type="nucleotide sequence ID" value="NC_009332.1"/>
</dbReference>
<dbReference type="KEGG" id="spf:SpyM51754"/>
<dbReference type="HOGENOM" id="CLU_146610_2_1_9"/>
<dbReference type="HAMAP" id="MF_01448">
    <property type="entry name" value="UPF0473"/>
    <property type="match status" value="1"/>
</dbReference>
<dbReference type="InterPro" id="IPR009711">
    <property type="entry name" value="UPF0473"/>
</dbReference>
<dbReference type="NCBIfam" id="NF010215">
    <property type="entry name" value="PRK13678.1-2"/>
    <property type="match status" value="1"/>
</dbReference>
<dbReference type="NCBIfam" id="NF010217">
    <property type="entry name" value="PRK13678.1-4"/>
    <property type="match status" value="1"/>
</dbReference>
<dbReference type="PANTHER" id="PTHR40066">
    <property type="entry name" value="UPF0473 PROTEIN CBO2561/CLC_2432"/>
    <property type="match status" value="1"/>
</dbReference>
<dbReference type="PANTHER" id="PTHR40066:SF1">
    <property type="entry name" value="UPF0473 PROTEIN CBO2561_CLC_2432"/>
    <property type="match status" value="1"/>
</dbReference>
<dbReference type="Pfam" id="PF06949">
    <property type="entry name" value="DUF1292"/>
    <property type="match status" value="1"/>
</dbReference>
<evidence type="ECO:0000255" key="1">
    <source>
        <dbReference type="HAMAP-Rule" id="MF_01448"/>
    </source>
</evidence>
<gene>
    <name type="ordered locus">SpyM51754</name>
</gene>
<reference key="1">
    <citation type="journal article" date="2007" name="J. Bacteriol.">
        <title>Complete genome of acute rheumatic fever-associated serotype M5 Streptococcus pyogenes strain Manfredo.</title>
        <authorList>
            <person name="Holden M.T.G."/>
            <person name="Scott A."/>
            <person name="Cherevach I."/>
            <person name="Chillingworth T."/>
            <person name="Churcher C."/>
            <person name="Cronin A."/>
            <person name="Dowd L."/>
            <person name="Feltwell T."/>
            <person name="Hamlin N."/>
            <person name="Holroyd S."/>
            <person name="Jagels K."/>
            <person name="Moule S."/>
            <person name="Mungall K."/>
            <person name="Quail M.A."/>
            <person name="Price C."/>
            <person name="Rabbinowitsch E."/>
            <person name="Sharp S."/>
            <person name="Skelton J."/>
            <person name="Whitehead S."/>
            <person name="Barrell B.G."/>
            <person name="Kehoe M."/>
            <person name="Parkhill J."/>
        </authorList>
    </citation>
    <scope>NUCLEOTIDE SEQUENCE [LARGE SCALE GENOMIC DNA]</scope>
    <source>
        <strain>Manfredo</strain>
    </source>
</reference>
<accession>A2RGU4</accession>
<name>Y1754_STRPG</name>
<comment type="similarity">
    <text evidence="1">Belongs to the UPF0473 family.</text>
</comment>
<sequence length="101" mass="11545">MTHNHENDHQHEVITLVDEQGNETLFEILLTIDGREEFGKNYVLLVPAGSEEDESGEIEIQAYSFTENEDGTEGDLQPIPEDSDAEWDMIEEVFNSFLDEN</sequence>
<organism>
    <name type="scientific">Streptococcus pyogenes serotype M5 (strain Manfredo)</name>
    <dbReference type="NCBI Taxonomy" id="160491"/>
    <lineage>
        <taxon>Bacteria</taxon>
        <taxon>Bacillati</taxon>
        <taxon>Bacillota</taxon>
        <taxon>Bacilli</taxon>
        <taxon>Lactobacillales</taxon>
        <taxon>Streptococcaceae</taxon>
        <taxon>Streptococcus</taxon>
    </lineage>
</organism>
<feature type="chain" id="PRO_0000304867" description="UPF0473 protein SpyM51754">
    <location>
        <begin position="1"/>
        <end position="101"/>
    </location>
</feature>
<proteinExistence type="inferred from homology"/>